<organism>
    <name type="scientific">Escherichia coli (strain K12)</name>
    <dbReference type="NCBI Taxonomy" id="83333"/>
    <lineage>
        <taxon>Bacteria</taxon>
        <taxon>Pseudomonadati</taxon>
        <taxon>Pseudomonadota</taxon>
        <taxon>Gammaproteobacteria</taxon>
        <taxon>Enterobacterales</taxon>
        <taxon>Enterobacteriaceae</taxon>
        <taxon>Escherichia</taxon>
    </lineage>
</organism>
<feature type="chain" id="PRO_0000169131" description="Uncharacterized protein YehI">
    <location>
        <begin position="1"/>
        <end position="1210"/>
    </location>
</feature>
<evidence type="ECO:0000305" key="1"/>
<sequence>MDKELPWLADNAQLELKYKKGKTPLSHRRWPGEPVSVITGSLIQTLGDELLQKAEKKKNIVWRYENFSLEWQSAITQAINLIGEHKPSIPARTMAALACIAQNDSQQLLDEIVQQEGLEYATEVVIARQFIARCYESDPLVVTLQYQDEDYGYGYRSETYNEFDLRLRKHLSLAEESCWQRCADKLIAALPGINKVRRPFIALILPEKPEIANELVGLECPRTHFHSKEWLKVVANDPTAVRKLEHYWSQDIFSDREASYMSHENHFGYAACAALLREQGLAAIPRLAMYAHKEDCGSLLVQINHPQVIRTLLLVADKNKPSLQRVAKYHKNFPHATLAALAELLALTEPPARPGYPIIEDKKLPAQQKARDEYWRTLLQTLMASQPQLAAEVMPWLSTQPQSVLKSYLSAPPKPVIDGTDNSNLPEILVSPPWRSKKKMTAPRLDLAPLELTPQVYWQPGEQERLAATEPARYFSTESLAQRMEQKSGRVVLQELGFGDDVWLFLNYILPGKLDAARNSLFVQWHYYQGRVEEILNGWNSPEAQLAEQALRSGHIEALINIWENDNYSHYRPEKSVWNLYLLAQLPREMALTFWLRINEKKHLFAGEDYFLSILGLDALPGLLLAFSHRPKETFPLILNFGATELALPVAHVWRRFAAQRDLARQWILQWPEHTASALIPLVFTKPSDNSEAALLALRLLYEQGHGELLQTVANRWQRTDVWSALEQLLKQGPMDIYPARIPKAPDFWHPQMWSRPRLITNNQTVTNDALEIIGEMLRFTQGGRFYSGLEQLKTFCQPQTLAAFAWDLFTAWQQAGAPAKDNWAFLALSLFGDESTARDLTTQILAWPQEGKSARAVSGLNILTLMNNDMALIQLHHISQRAKSRPLRDNAAEFLQVVAENRGLSQEELADRLVPTLGLDDPQALSFDFGPRQFTVRFDENLNPVIFDQQNVRQKSVPRLRADDDQLKAPEALARLKGLKKDATQVSKNLLPRLETALRTTRRWSLADFHSLFVNHPFTRLVTQRLIWGVYPANEPRCLLKAFRVAAEGEFCNAQDEPIDLPADALIGIAHPLEMTAEMRSEFAQLFADYEIMPPFRQLSRRTVLLTPDESTSNSLTRWEGKSATVGQLMGMRYKGWESGYEDAFVYNLGEYRLVLKFSPGFNHYNVDSKALMSFRSLRVYRDNKSVTFAELDVFDLSEALSAPDVIFH</sequence>
<gene>
    <name type="primary">yehI</name>
    <name type="ordered locus">b2118</name>
    <name type="ordered locus">JW2105</name>
</gene>
<protein>
    <recommendedName>
        <fullName>Uncharacterized protein YehI</fullName>
    </recommendedName>
</protein>
<proteinExistence type="predicted"/>
<dbReference type="EMBL" id="U00007">
    <property type="protein sequence ID" value="AAA60478.1"/>
    <property type="status" value="ALT_FRAME"/>
    <property type="molecule type" value="Genomic_DNA"/>
</dbReference>
<dbReference type="EMBL" id="U00096">
    <property type="protein sequence ID" value="AAC75179.1"/>
    <property type="molecule type" value="Genomic_DNA"/>
</dbReference>
<dbReference type="EMBL" id="AP009048">
    <property type="protein sequence ID" value="BAE76593.1"/>
    <property type="molecule type" value="Genomic_DNA"/>
</dbReference>
<dbReference type="PIR" id="E64979">
    <property type="entry name" value="E64979"/>
</dbReference>
<dbReference type="RefSeq" id="NP_416621.1">
    <property type="nucleotide sequence ID" value="NC_000913.3"/>
</dbReference>
<dbReference type="RefSeq" id="WP_000356817.1">
    <property type="nucleotide sequence ID" value="NZ_LN832404.1"/>
</dbReference>
<dbReference type="BioGRID" id="4259176">
    <property type="interactions" value="41"/>
</dbReference>
<dbReference type="BioGRID" id="850993">
    <property type="interactions" value="3"/>
</dbReference>
<dbReference type="FunCoup" id="P33346">
    <property type="interactions" value="62"/>
</dbReference>
<dbReference type="IntAct" id="P33346">
    <property type="interactions" value="8"/>
</dbReference>
<dbReference type="STRING" id="511145.b2118"/>
<dbReference type="PaxDb" id="511145-b2118"/>
<dbReference type="EnsemblBacteria" id="AAC75179">
    <property type="protein sequence ID" value="AAC75179"/>
    <property type="gene ID" value="b2118"/>
</dbReference>
<dbReference type="GeneID" id="946649"/>
<dbReference type="KEGG" id="ecj:JW2105"/>
<dbReference type="KEGG" id="eco:b2118"/>
<dbReference type="KEGG" id="ecoc:C3026_11875"/>
<dbReference type="PATRIC" id="fig|511145.12.peg.2195"/>
<dbReference type="EchoBASE" id="EB1936"/>
<dbReference type="eggNOG" id="COG3831">
    <property type="taxonomic scope" value="Bacteria"/>
</dbReference>
<dbReference type="HOGENOM" id="CLU_006807_1_0_6"/>
<dbReference type="InParanoid" id="P33346"/>
<dbReference type="OMA" id="ESSWQRC"/>
<dbReference type="OrthoDB" id="8859114at2"/>
<dbReference type="BioCyc" id="EcoCyc:EG11995-MONOMER"/>
<dbReference type="PRO" id="PR:P33346"/>
<dbReference type="Proteomes" id="UP000000625">
    <property type="component" value="Chromosome"/>
</dbReference>
<dbReference type="InterPro" id="IPR025406">
    <property type="entry name" value="DUF4132"/>
</dbReference>
<dbReference type="InterPro" id="IPR050458">
    <property type="entry name" value="LolB"/>
</dbReference>
<dbReference type="PANTHER" id="PTHR30634">
    <property type="entry name" value="OUTER MEMBRANE LOLAB LIPOPROTEIN INSERTION APPARATUS"/>
    <property type="match status" value="1"/>
</dbReference>
<dbReference type="PANTHER" id="PTHR30634:SF16">
    <property type="entry name" value="OUTER-MEMBRANE LIPOPROTEIN LOLB"/>
    <property type="match status" value="1"/>
</dbReference>
<dbReference type="Pfam" id="PF13569">
    <property type="entry name" value="DUF4132"/>
    <property type="match status" value="1"/>
</dbReference>
<keyword id="KW-1185">Reference proteome</keyword>
<accession>P33346</accession>
<accession>P76430</accession>
<accession>Q2MAW3</accession>
<comment type="similarity">
    <text evidence="1">To E.coli molybdate metabolism regulator (MolR).</text>
</comment>
<comment type="sequence caution" evidence="1">
    <conflict type="frameshift">
        <sequence resource="EMBL-CDS" id="AAA60478"/>
    </conflict>
</comment>
<reference key="1">
    <citation type="submission" date="1993-10" db="EMBL/GenBank/DDBJ databases">
        <title>Automated multiplex sequencing of the E.coli genome.</title>
        <authorList>
            <person name="Richterich P."/>
            <person name="Lakey N."/>
            <person name="Gryan G."/>
            <person name="Jaehn L."/>
            <person name="Mintz L."/>
            <person name="Robison K."/>
            <person name="Church G.M."/>
        </authorList>
    </citation>
    <scope>NUCLEOTIDE SEQUENCE [LARGE SCALE GENOMIC DNA]</scope>
    <source>
        <strain>K12 / BHB2600</strain>
    </source>
</reference>
<reference key="2">
    <citation type="journal article" date="1997" name="Science">
        <title>The complete genome sequence of Escherichia coli K-12.</title>
        <authorList>
            <person name="Blattner F.R."/>
            <person name="Plunkett G. III"/>
            <person name="Bloch C.A."/>
            <person name="Perna N.T."/>
            <person name="Burland V."/>
            <person name="Riley M."/>
            <person name="Collado-Vides J."/>
            <person name="Glasner J.D."/>
            <person name="Rode C.K."/>
            <person name="Mayhew G.F."/>
            <person name="Gregor J."/>
            <person name="Davis N.W."/>
            <person name="Kirkpatrick H.A."/>
            <person name="Goeden M.A."/>
            <person name="Rose D.J."/>
            <person name="Mau B."/>
            <person name="Shao Y."/>
        </authorList>
    </citation>
    <scope>NUCLEOTIDE SEQUENCE [LARGE SCALE GENOMIC DNA]</scope>
    <source>
        <strain>K12 / MG1655 / ATCC 47076</strain>
    </source>
</reference>
<reference key="3">
    <citation type="journal article" date="2006" name="Mol. Syst. Biol.">
        <title>Highly accurate genome sequences of Escherichia coli K-12 strains MG1655 and W3110.</title>
        <authorList>
            <person name="Hayashi K."/>
            <person name="Morooka N."/>
            <person name="Yamamoto Y."/>
            <person name="Fujita K."/>
            <person name="Isono K."/>
            <person name="Choi S."/>
            <person name="Ohtsubo E."/>
            <person name="Baba T."/>
            <person name="Wanner B.L."/>
            <person name="Mori H."/>
            <person name="Horiuchi T."/>
        </authorList>
    </citation>
    <scope>NUCLEOTIDE SEQUENCE [LARGE SCALE GENOMIC DNA]</scope>
    <source>
        <strain>K12 / W3110 / ATCC 27325 / DSM 5911</strain>
    </source>
</reference>
<name>YEHI_ECOLI</name>